<reference key="1">
    <citation type="journal article" date="2004" name="Nature">
        <title>Genome evolution in yeasts.</title>
        <authorList>
            <person name="Dujon B."/>
            <person name="Sherman D."/>
            <person name="Fischer G."/>
            <person name="Durrens P."/>
            <person name="Casaregola S."/>
            <person name="Lafontaine I."/>
            <person name="de Montigny J."/>
            <person name="Marck C."/>
            <person name="Neuveglise C."/>
            <person name="Talla E."/>
            <person name="Goffard N."/>
            <person name="Frangeul L."/>
            <person name="Aigle M."/>
            <person name="Anthouard V."/>
            <person name="Babour A."/>
            <person name="Barbe V."/>
            <person name="Barnay S."/>
            <person name="Blanchin S."/>
            <person name="Beckerich J.-M."/>
            <person name="Beyne E."/>
            <person name="Bleykasten C."/>
            <person name="Boisrame A."/>
            <person name="Boyer J."/>
            <person name="Cattolico L."/>
            <person name="Confanioleri F."/>
            <person name="de Daruvar A."/>
            <person name="Despons L."/>
            <person name="Fabre E."/>
            <person name="Fairhead C."/>
            <person name="Ferry-Dumazet H."/>
            <person name="Groppi A."/>
            <person name="Hantraye F."/>
            <person name="Hennequin C."/>
            <person name="Jauniaux N."/>
            <person name="Joyet P."/>
            <person name="Kachouri R."/>
            <person name="Kerrest A."/>
            <person name="Koszul R."/>
            <person name="Lemaire M."/>
            <person name="Lesur I."/>
            <person name="Ma L."/>
            <person name="Muller H."/>
            <person name="Nicaud J.-M."/>
            <person name="Nikolski M."/>
            <person name="Oztas S."/>
            <person name="Ozier-Kalogeropoulos O."/>
            <person name="Pellenz S."/>
            <person name="Potier S."/>
            <person name="Richard G.-F."/>
            <person name="Straub M.-L."/>
            <person name="Suleau A."/>
            <person name="Swennen D."/>
            <person name="Tekaia F."/>
            <person name="Wesolowski-Louvel M."/>
            <person name="Westhof E."/>
            <person name="Wirth B."/>
            <person name="Zeniou-Meyer M."/>
            <person name="Zivanovic Y."/>
            <person name="Bolotin-Fukuhara M."/>
            <person name="Thierry A."/>
            <person name="Bouchier C."/>
            <person name="Caudron B."/>
            <person name="Scarpelli C."/>
            <person name="Gaillardin C."/>
            <person name="Weissenbach J."/>
            <person name="Wincker P."/>
            <person name="Souciet J.-L."/>
        </authorList>
    </citation>
    <scope>NUCLEOTIDE SEQUENCE [LARGE SCALE GENOMIC DNA]</scope>
    <source>
        <strain>ATCC 36239 / CBS 767 / BCRC 21394 / JCM 1990 / NBRC 0083 / IGC 2968</strain>
    </source>
</reference>
<keyword id="KW-0963">Cytoplasm</keyword>
<keyword id="KW-0408">Iron</keyword>
<keyword id="KW-0479">Metal-binding</keyword>
<keyword id="KW-0539">Nucleus</keyword>
<keyword id="KW-1185">Reference proteome</keyword>
<keyword id="KW-0862">Zinc</keyword>
<proteinExistence type="inferred from homology"/>
<gene>
    <name type="primary">DPH4</name>
    <name type="ordered locus">DEHA2E14828g</name>
</gene>
<sequence>MDPYIEDRDIQKRSHYKVLGVVPTCNDLDIKSAYKEMLLAHHPDKNGNASTTINSIQEAYKTLIDPELRDQYDDSLKRSIQRQGFNITGDGLDIYCLDDFEMEEEEECKWLKDCPRCQFPKSIKFKESDLIENGTEDGDNGFDIIVQCESCSLWIKVKYYEINEEDDE</sequence>
<evidence type="ECO:0000250" key="1"/>
<evidence type="ECO:0000255" key="2">
    <source>
        <dbReference type="PROSITE-ProRule" id="PRU00286"/>
    </source>
</evidence>
<evidence type="ECO:0000255" key="3">
    <source>
        <dbReference type="PROSITE-ProRule" id="PRU00456"/>
    </source>
</evidence>
<evidence type="ECO:0000305" key="4"/>
<accession>Q6BPC1</accession>
<protein>
    <recommendedName>
        <fullName>Diphthamide biosynthesis protein 4</fullName>
    </recommendedName>
</protein>
<comment type="function">
    <text evidence="1">Required for the first step of diphthamide biosynthesis, the transfer of 3-amino-3-carboxypropyl from S-adenosyl-L-methionine to a histidine residue. Diphthamide is a post-translational modification of histidine which occurs in elongation factor 2 (By similarity).</text>
</comment>
<comment type="pathway">
    <text>Protein modification; peptidyl-diphthamide biosynthesis.</text>
</comment>
<comment type="subcellular location">
    <subcellularLocation>
        <location evidence="1">Cytoplasm</location>
    </subcellularLocation>
    <subcellularLocation>
        <location evidence="1">Nucleus</location>
    </subcellularLocation>
</comment>
<comment type="domain">
    <text evidence="3">The DPH-type metal-binding (MB) domain can bind either zinc or iron ions.</text>
</comment>
<comment type="similarity">
    <text evidence="4">Belongs to the DPH4 family.</text>
</comment>
<feature type="chain" id="PRO_0000071147" description="Diphthamide biosynthesis protein 4">
    <location>
        <begin position="1"/>
        <end position="168"/>
    </location>
</feature>
<feature type="domain" description="J" evidence="2">
    <location>
        <begin position="14"/>
        <end position="76"/>
    </location>
</feature>
<feature type="domain" description="DPH-type MB" evidence="3">
    <location>
        <begin position="91"/>
        <end position="160"/>
    </location>
</feature>
<feature type="binding site" evidence="3">
    <location>
        <position position="114"/>
    </location>
    <ligand>
        <name>Zn(2+)</name>
        <dbReference type="ChEBI" id="CHEBI:29105"/>
    </ligand>
</feature>
<feature type="binding site" evidence="3">
    <location>
        <position position="117"/>
    </location>
    <ligand>
        <name>Zn(2+)</name>
        <dbReference type="ChEBI" id="CHEBI:29105"/>
    </ligand>
</feature>
<feature type="binding site" evidence="3">
    <location>
        <position position="148"/>
    </location>
    <ligand>
        <name>Zn(2+)</name>
        <dbReference type="ChEBI" id="CHEBI:29105"/>
    </ligand>
</feature>
<feature type="binding site" evidence="3">
    <location>
        <position position="151"/>
    </location>
    <ligand>
        <name>Zn(2+)</name>
        <dbReference type="ChEBI" id="CHEBI:29105"/>
    </ligand>
</feature>
<organism>
    <name type="scientific">Debaryomyces hansenii (strain ATCC 36239 / CBS 767 / BCRC 21394 / JCM 1990 / NBRC 0083 / IGC 2968)</name>
    <name type="common">Yeast</name>
    <name type="synonym">Torulaspora hansenii</name>
    <dbReference type="NCBI Taxonomy" id="284592"/>
    <lineage>
        <taxon>Eukaryota</taxon>
        <taxon>Fungi</taxon>
        <taxon>Dikarya</taxon>
        <taxon>Ascomycota</taxon>
        <taxon>Saccharomycotina</taxon>
        <taxon>Pichiomycetes</taxon>
        <taxon>Debaryomycetaceae</taxon>
        <taxon>Debaryomyces</taxon>
    </lineage>
</organism>
<dbReference type="EMBL" id="CR382137">
    <property type="protein sequence ID" value="CAG88195.1"/>
    <property type="molecule type" value="Genomic_DNA"/>
</dbReference>
<dbReference type="RefSeq" id="XP_459949.1">
    <property type="nucleotide sequence ID" value="XM_459949.1"/>
</dbReference>
<dbReference type="SMR" id="Q6BPC1"/>
<dbReference type="FunCoup" id="Q6BPC1">
    <property type="interactions" value="386"/>
</dbReference>
<dbReference type="STRING" id="284592.Q6BPC1"/>
<dbReference type="GeneID" id="2902274"/>
<dbReference type="KEGG" id="dha:DEHA2E14828g"/>
<dbReference type="VEuPathDB" id="FungiDB:DEHA2E14828g"/>
<dbReference type="eggNOG" id="KOG0714">
    <property type="taxonomic scope" value="Eukaryota"/>
</dbReference>
<dbReference type="HOGENOM" id="CLU_017633_7_0_1"/>
<dbReference type="InParanoid" id="Q6BPC1"/>
<dbReference type="OMA" id="IIGCRGC"/>
<dbReference type="OrthoDB" id="445556at2759"/>
<dbReference type="UniPathway" id="UPA00559"/>
<dbReference type="Proteomes" id="UP000000599">
    <property type="component" value="Chromosome E"/>
</dbReference>
<dbReference type="GO" id="GO:0005737">
    <property type="term" value="C:cytoplasm"/>
    <property type="evidence" value="ECO:0007669"/>
    <property type="project" value="UniProtKB-SubCell"/>
</dbReference>
<dbReference type="GO" id="GO:0005634">
    <property type="term" value="C:nucleus"/>
    <property type="evidence" value="ECO:0007669"/>
    <property type="project" value="UniProtKB-SubCell"/>
</dbReference>
<dbReference type="GO" id="GO:0046872">
    <property type="term" value="F:metal ion binding"/>
    <property type="evidence" value="ECO:0007669"/>
    <property type="project" value="UniProtKB-KW"/>
</dbReference>
<dbReference type="GO" id="GO:0017183">
    <property type="term" value="P:protein histidyl modification to diphthamide"/>
    <property type="evidence" value="ECO:0007669"/>
    <property type="project" value="UniProtKB-UniPathway"/>
</dbReference>
<dbReference type="CDD" id="cd06257">
    <property type="entry name" value="DnaJ"/>
    <property type="match status" value="1"/>
</dbReference>
<dbReference type="Gene3D" id="1.10.287.110">
    <property type="entry name" value="DnaJ domain"/>
    <property type="match status" value="1"/>
</dbReference>
<dbReference type="Gene3D" id="3.10.660.10">
    <property type="entry name" value="DPH Zinc finger"/>
    <property type="match status" value="1"/>
</dbReference>
<dbReference type="InterPro" id="IPR053232">
    <property type="entry name" value="DnaJ_C/III_chloroplastic"/>
</dbReference>
<dbReference type="InterPro" id="IPR001623">
    <property type="entry name" value="DnaJ_domain"/>
</dbReference>
<dbReference type="InterPro" id="IPR007872">
    <property type="entry name" value="DPH_MB_dom"/>
</dbReference>
<dbReference type="InterPro" id="IPR036671">
    <property type="entry name" value="DPH_MB_sf"/>
</dbReference>
<dbReference type="InterPro" id="IPR036869">
    <property type="entry name" value="J_dom_sf"/>
</dbReference>
<dbReference type="PANTHER" id="PTHR45090">
    <property type="entry name" value="CHAPERONE PROTEIN DNAJ 20 CHLOROPLASTIC"/>
    <property type="match status" value="1"/>
</dbReference>
<dbReference type="PANTHER" id="PTHR45090:SF4">
    <property type="entry name" value="J DOMAIN-CONTAINING PROTEIN"/>
    <property type="match status" value="1"/>
</dbReference>
<dbReference type="Pfam" id="PF00226">
    <property type="entry name" value="DnaJ"/>
    <property type="match status" value="1"/>
</dbReference>
<dbReference type="Pfam" id="PF05207">
    <property type="entry name" value="Zn_ribbon_CSL"/>
    <property type="match status" value="1"/>
</dbReference>
<dbReference type="PRINTS" id="PR00625">
    <property type="entry name" value="JDOMAIN"/>
</dbReference>
<dbReference type="SMART" id="SM00271">
    <property type="entry name" value="DnaJ"/>
    <property type="match status" value="1"/>
</dbReference>
<dbReference type="SUPFAM" id="SSF46565">
    <property type="entry name" value="Chaperone J-domain"/>
    <property type="match status" value="1"/>
</dbReference>
<dbReference type="SUPFAM" id="SSF144217">
    <property type="entry name" value="CSL zinc finger"/>
    <property type="match status" value="1"/>
</dbReference>
<dbReference type="PROSITE" id="PS50076">
    <property type="entry name" value="DNAJ_2"/>
    <property type="match status" value="1"/>
</dbReference>
<dbReference type="PROSITE" id="PS51074">
    <property type="entry name" value="DPH_MB"/>
    <property type="match status" value="1"/>
</dbReference>
<name>DPH4_DEBHA</name>